<proteinExistence type="inferred from homology"/>
<evidence type="ECO:0000255" key="1">
    <source>
        <dbReference type="HAMAP-Rule" id="MF_00904"/>
    </source>
</evidence>
<organism>
    <name type="scientific">Erwinia billingiae (strain Eb661)</name>
    <dbReference type="NCBI Taxonomy" id="634500"/>
    <lineage>
        <taxon>Bacteria</taxon>
        <taxon>Pseudomonadati</taxon>
        <taxon>Pseudomonadota</taxon>
        <taxon>Gammaproteobacteria</taxon>
        <taxon>Enterobacterales</taxon>
        <taxon>Erwiniaceae</taxon>
        <taxon>Erwinia</taxon>
    </lineage>
</organism>
<feature type="chain" id="PRO_0000413186" description="Modulator protein MzrA">
    <location>
        <begin position="1"/>
        <end position="128"/>
    </location>
</feature>
<feature type="topological domain" description="Cytoplasmic" evidence="1">
    <location>
        <begin position="1"/>
        <end position="13"/>
    </location>
</feature>
<feature type="transmembrane region" description="Helical" evidence="1">
    <location>
        <begin position="14"/>
        <end position="34"/>
    </location>
</feature>
<feature type="topological domain" description="Periplasmic" evidence="1">
    <location>
        <begin position="35"/>
        <end position="128"/>
    </location>
</feature>
<gene>
    <name evidence="1" type="primary">mzrA</name>
    <name type="ordered locus">EbC_05100</name>
</gene>
<reference key="1">
    <citation type="journal article" date="2010" name="BMC Genomics">
        <title>Genome comparison of the epiphytic bacteria Erwinia billingiae and E. tasmaniensis with the pear pathogen E. pyrifoliae.</title>
        <authorList>
            <person name="Kube M."/>
            <person name="Migdoll A.M."/>
            <person name="Gehring I."/>
            <person name="Heitmann K."/>
            <person name="Mayer Y."/>
            <person name="Kuhl H."/>
            <person name="Knaust F."/>
            <person name="Geider K."/>
            <person name="Reinhardt R."/>
        </authorList>
    </citation>
    <scope>NUCLEOTIDE SEQUENCE [LARGE SCALE GENOMIC DNA]</scope>
    <source>
        <strain>Eb661</strain>
    </source>
</reference>
<name>MZRA_ERWBE</name>
<comment type="function">
    <text evidence="1">Modulates the activity of the EnvZ/OmpR two-component regulatory system, probably by directly modulating EnvZ enzymatic activity and increasing stability of phosphorylated OmpR.</text>
</comment>
<comment type="subunit">
    <text evidence="1">Interacts with EnvZ.</text>
</comment>
<comment type="subcellular location">
    <subcellularLocation>
        <location evidence="1">Cell inner membrane</location>
        <topology evidence="1">Single-pass membrane protein</topology>
    </subcellularLocation>
</comment>
<comment type="similarity">
    <text evidence="1">Belongs to the MzrA family.</text>
</comment>
<sequence length="128" mass="14354">MLALLRPYLSTRVLCVLVVCFSALMLVAFIPTLFRNDTALQIRASRQGTTLPDGFYVYQRLNAEGIRIKSITPDNDSLVIRFDTEEQSMAAEKVLHQLLPYGFDIGQMDPSGSSQLMNRLSLRKQSVG</sequence>
<accession>D8MMF7</accession>
<protein>
    <recommendedName>
        <fullName evidence="1">Modulator protein MzrA</fullName>
    </recommendedName>
</protein>
<dbReference type="EMBL" id="FP236843">
    <property type="protein sequence ID" value="CAX58041.1"/>
    <property type="molecule type" value="Genomic_DNA"/>
</dbReference>
<dbReference type="RefSeq" id="WP_013200546.1">
    <property type="nucleotide sequence ID" value="NC_014306.1"/>
</dbReference>
<dbReference type="SMR" id="D8MMF7"/>
<dbReference type="STRING" id="634500.EbC_05100"/>
<dbReference type="GeneID" id="90510511"/>
<dbReference type="KEGG" id="ebi:EbC_05100"/>
<dbReference type="eggNOG" id="ENOG50333DY">
    <property type="taxonomic scope" value="Bacteria"/>
</dbReference>
<dbReference type="HOGENOM" id="CLU_153761_1_0_6"/>
<dbReference type="Proteomes" id="UP000008793">
    <property type="component" value="Chromosome"/>
</dbReference>
<dbReference type="GO" id="GO:0005886">
    <property type="term" value="C:plasma membrane"/>
    <property type="evidence" value="ECO:0007669"/>
    <property type="project" value="UniProtKB-SubCell"/>
</dbReference>
<dbReference type="GO" id="GO:0019901">
    <property type="term" value="F:protein kinase binding"/>
    <property type="evidence" value="ECO:0007669"/>
    <property type="project" value="UniProtKB-UniRule"/>
</dbReference>
<dbReference type="Gene3D" id="3.30.70.260">
    <property type="match status" value="1"/>
</dbReference>
<dbReference type="HAMAP" id="MF_00904">
    <property type="entry name" value="Modulator_MzrA"/>
    <property type="match status" value="1"/>
</dbReference>
<dbReference type="InterPro" id="IPR026574">
    <property type="entry name" value="Modulator_MzrA"/>
</dbReference>
<dbReference type="InterPro" id="IPR027398">
    <property type="entry name" value="SecD-TM"/>
</dbReference>
<dbReference type="NCBIfam" id="NF007915">
    <property type="entry name" value="PRK10629.1"/>
    <property type="match status" value="1"/>
</dbReference>
<dbReference type="Pfam" id="PF13721">
    <property type="entry name" value="SecD-TM1"/>
    <property type="match status" value="1"/>
</dbReference>
<keyword id="KW-0997">Cell inner membrane</keyword>
<keyword id="KW-1003">Cell membrane</keyword>
<keyword id="KW-0472">Membrane</keyword>
<keyword id="KW-1185">Reference proteome</keyword>
<keyword id="KW-0812">Transmembrane</keyword>
<keyword id="KW-1133">Transmembrane helix</keyword>